<keyword id="KW-0027">Amidation</keyword>
<keyword id="KW-0878">Amphibian defense peptide</keyword>
<keyword id="KW-0044">Antibiotic</keyword>
<keyword id="KW-0929">Antimicrobial</keyword>
<keyword id="KW-0165">Cleavage on pair of basic residues</keyword>
<keyword id="KW-0964">Secreted</keyword>
<keyword id="KW-0732">Signal</keyword>
<protein>
    <recommendedName>
        <fullName evidence="4">Dermatoxin-DA1</fullName>
        <shortName evidence="4">DRT-DA1</shortName>
    </recommendedName>
    <alternativeName>
        <fullName evidence="5">Dermaseptin PD-1-5</fullName>
    </alternativeName>
</protein>
<reference key="1">
    <citation type="journal article" date="1998" name="Biochim. Biophys. Acta">
        <title>Cloning of cDNAs encoding new peptides of the dermaseptin-family.</title>
        <authorList>
            <person name="Wechselberger C."/>
        </authorList>
    </citation>
    <scope>NUCLEOTIDE SEQUENCE [MRNA]</scope>
    <source>
        <tissue>Skin</tissue>
    </source>
</reference>
<reference key="2">
    <citation type="journal article" date="2008" name="Peptides">
        <title>A consistent nomenclature of antimicrobial peptides isolated from frogs of the subfamily Phyllomedusinae.</title>
        <authorList>
            <person name="Amiche M."/>
            <person name="Ladram A."/>
            <person name="Nicolas P."/>
        </authorList>
    </citation>
    <scope>NOMENCLATURE</scope>
</reference>
<name>DRT1_AGADC</name>
<evidence type="ECO:0000250" key="1"/>
<evidence type="ECO:0000250" key="2">
    <source>
        <dbReference type="UniProtKB" id="Q5DVA5"/>
    </source>
</evidence>
<evidence type="ECO:0000255" key="3"/>
<evidence type="ECO:0000303" key="4">
    <source>
    </source>
</evidence>
<evidence type="ECO:0000303" key="5">
    <source>
    </source>
</evidence>
<evidence type="ECO:0000305" key="6"/>
<evidence type="ECO:0000305" key="7">
    <source>
    </source>
</evidence>
<feature type="signal peptide" evidence="3">
    <location>
        <begin position="1"/>
        <end position="22"/>
    </location>
</feature>
<feature type="propeptide" id="PRO_0000007076" evidence="6">
    <location>
        <begin position="23"/>
        <end position="42"/>
    </location>
</feature>
<feature type="peptide" id="PRO_0000007077" description="Dermatoxin-DA1" evidence="7">
    <location>
        <begin position="45"/>
        <end position="76"/>
    </location>
</feature>
<feature type="modified residue" description="Lysine amide" evidence="2">
    <location>
        <position position="76"/>
    </location>
</feature>
<organism>
    <name type="scientific">Agalychnis dacnicolor</name>
    <name type="common">Giant Mexican leaf frog</name>
    <name type="synonym">Pachymedusa dacnicolor</name>
    <dbReference type="NCBI Taxonomy" id="75988"/>
    <lineage>
        <taxon>Eukaryota</taxon>
        <taxon>Metazoa</taxon>
        <taxon>Chordata</taxon>
        <taxon>Craniata</taxon>
        <taxon>Vertebrata</taxon>
        <taxon>Euteleostomi</taxon>
        <taxon>Amphibia</taxon>
        <taxon>Batrachia</taxon>
        <taxon>Anura</taxon>
        <taxon>Neobatrachia</taxon>
        <taxon>Hyloidea</taxon>
        <taxon>Hylidae</taxon>
        <taxon>Phyllomedusinae</taxon>
        <taxon>Agalychnis</taxon>
    </lineage>
</organism>
<proteinExistence type="inferred from homology"/>
<accession>O93451</accession>
<dbReference type="EMBL" id="AJ005189">
    <property type="protein sequence ID" value="CAA06426.1"/>
    <property type="molecule type" value="mRNA"/>
</dbReference>
<dbReference type="GO" id="GO:0005576">
    <property type="term" value="C:extracellular region"/>
    <property type="evidence" value="ECO:0007669"/>
    <property type="project" value="UniProtKB-SubCell"/>
</dbReference>
<dbReference type="GO" id="GO:0042742">
    <property type="term" value="P:defense response to bacterium"/>
    <property type="evidence" value="ECO:0007669"/>
    <property type="project" value="UniProtKB-KW"/>
</dbReference>
<dbReference type="InterPro" id="IPR004275">
    <property type="entry name" value="Frog_antimicrobial_propeptide"/>
</dbReference>
<dbReference type="InterPro" id="IPR016322">
    <property type="entry name" value="FSAP"/>
</dbReference>
<dbReference type="Pfam" id="PF03032">
    <property type="entry name" value="FSAP_sig_propep"/>
    <property type="match status" value="1"/>
</dbReference>
<dbReference type="PIRSF" id="PIRSF001822">
    <property type="entry name" value="Dermaseptin_precursor"/>
    <property type="match status" value="1"/>
</dbReference>
<sequence>MAFLKKSLFLVLFLGLVPLFLCENEKREGENEKEENDDQSEEKRSLGSFMKGVGKGLATVGKIVADQFGKLLEAGKG</sequence>
<comment type="function">
    <text evidence="1">Possesses a potent antimicrobial activity against Gram-positive and Gram-negative bacteria. Probably acts by disturbing membrane functions with its amphipathic structure (By similarity).</text>
</comment>
<comment type="subcellular location">
    <subcellularLocation>
        <location evidence="7">Secreted</location>
    </subcellularLocation>
</comment>
<comment type="tissue specificity">
    <text evidence="7">Expressed by the skin glands.</text>
</comment>
<comment type="similarity">
    <text evidence="6">Belongs to the frog skin active peptide (FSAP) family. Dermatoxin subfamily.</text>
</comment>
<comment type="online information" name="The antimicrobial peptide database">
    <link uri="https://wangapd3.com/database/query_output.php?ID=0908"/>
</comment>